<reference key="1">
    <citation type="journal article" date="2002" name="J. Bacteriol.">
        <title>Whole-genome comparison of Mycobacterium tuberculosis clinical and laboratory strains.</title>
        <authorList>
            <person name="Fleischmann R.D."/>
            <person name="Alland D."/>
            <person name="Eisen J.A."/>
            <person name="Carpenter L."/>
            <person name="White O."/>
            <person name="Peterson J.D."/>
            <person name="DeBoy R.T."/>
            <person name="Dodson R.J."/>
            <person name="Gwinn M.L."/>
            <person name="Haft D.H."/>
            <person name="Hickey E.K."/>
            <person name="Kolonay J.F."/>
            <person name="Nelson W.C."/>
            <person name="Umayam L.A."/>
            <person name="Ermolaeva M.D."/>
            <person name="Salzberg S.L."/>
            <person name="Delcher A."/>
            <person name="Utterback T.R."/>
            <person name="Weidman J.F."/>
            <person name="Khouri H.M."/>
            <person name="Gill J."/>
            <person name="Mikula A."/>
            <person name="Bishai W."/>
            <person name="Jacobs W.R. Jr."/>
            <person name="Venter J.C."/>
            <person name="Fraser C.M."/>
        </authorList>
    </citation>
    <scope>NUCLEOTIDE SEQUENCE [LARGE SCALE GENOMIC DNA]</scope>
    <source>
        <strain>CDC 1551 / Oshkosh</strain>
    </source>
</reference>
<gene>
    <name type="primary">plsB</name>
    <name type="synonym">plsB2</name>
    <name type="ordered locus">MT2555</name>
</gene>
<protein>
    <recommendedName>
        <fullName>Glycerol-3-phosphate acyltransferase</fullName>
        <shortName>GPAT</shortName>
        <ecNumber>2.3.1.15</ecNumber>
    </recommendedName>
</protein>
<comment type="catalytic activity">
    <reaction>
        <text>sn-glycerol 3-phosphate + an acyl-CoA = a 1-acyl-sn-glycero-3-phosphate + CoA</text>
        <dbReference type="Rhea" id="RHEA:15325"/>
        <dbReference type="ChEBI" id="CHEBI:57287"/>
        <dbReference type="ChEBI" id="CHEBI:57597"/>
        <dbReference type="ChEBI" id="CHEBI:57970"/>
        <dbReference type="ChEBI" id="CHEBI:58342"/>
        <dbReference type="EC" id="2.3.1.15"/>
    </reaction>
</comment>
<comment type="pathway">
    <text>Phospholipid metabolism; CDP-diacylglycerol biosynthesis; CDP-diacylglycerol from sn-glycerol 3-phosphate: step 1/3.</text>
</comment>
<comment type="subcellular location">
    <subcellularLocation>
        <location evidence="1">Cell membrane</location>
        <topology evidence="1">Peripheral membrane protein</topology>
        <orientation evidence="1">Cytoplasmic side</orientation>
    </subcellularLocation>
</comment>
<comment type="domain">
    <text evidence="1">The HXXXXD motif is essential for acyltransferase activity and may constitute the binding site for the phosphate moiety of the glycerol-3-phosphate.</text>
</comment>
<comment type="similarity">
    <text evidence="2">Belongs to the GPAT/DAPAT family.</text>
</comment>
<sequence length="789" mass="88340">MTKPAADASAVLTAEDTLVLASTATPVEMELIMGWLGQQRARHPDSKFDILKLPPRNAPPAALTALVEQLEPGFASSPQSGEDRSIVPVRVIWLPPADRSRAGKVAALLPGRDPYHPSQRQQRRILRTDPRRARVVAGESAKVSELRQQWRDTTVAEHKRDFAQFVSRRALLALARAEYQILGPQYKSPRLVKPEMLASARFRAGLDRIPGATVEDAGKMLDELSTGWSQVSVDLVSVLGRLASRGFDPEFDYDEYQVAAMRAALEAHPAVLLFSHRSYIDGVVVPVAMQDNRLPPVHMFGGINLSFGLMGPLMRRSGMIFIRRNIGNDPLYKYVLKEYVGYVVEKRFNLSWSIEGTRSRTGKMLPPKLGLMSYVADAYLDGRSDDILLQGVSICFDQLHEITEYAAYARGAEKTPEGLRWLYNFIKAQGERNFGKIYVRFPEAVSMRQYLGAPHGELTQDPAAKRLALQKMSFEVAWRILQATPVTATGLVSALLLTTRGTALTLDQLHHTLQDSLDYLERKQSPVSTSALRLRSREGVRAAADALSNGHPVTRVDSGREPVWYIAPDDEHAAAFYRNSVIHAFLETSIVELALAHAKHAEGDRVAAFWAQAMRLRDLLKFDFYFADSTAFRANIAQEMAWHQDWEDHLGVGGNEIDAMLYAKRPLMSDAMLRVFFEAYEIVADVLRDAPPDIGPEELTELALGLGRQFVAQGRVRSSEPVSTLLFATARQVAVDQELIAPAADLAERRVAFRRELRNILRDFDYVEQIARNQFVAREFKARQGRDRI</sequence>
<proteinExistence type="inferred from homology"/>
<organism>
    <name type="scientific">Mycobacterium tuberculosis (strain CDC 1551 / Oshkosh)</name>
    <dbReference type="NCBI Taxonomy" id="83331"/>
    <lineage>
        <taxon>Bacteria</taxon>
        <taxon>Bacillati</taxon>
        <taxon>Actinomycetota</taxon>
        <taxon>Actinomycetes</taxon>
        <taxon>Mycobacteriales</taxon>
        <taxon>Mycobacteriaceae</taxon>
        <taxon>Mycobacterium</taxon>
        <taxon>Mycobacterium tuberculosis complex</taxon>
    </lineage>
</organism>
<accession>P9WI60</accession>
<accession>L0T9X9</accession>
<accession>O53207</accession>
<evidence type="ECO:0000250" key="1"/>
<evidence type="ECO:0000305" key="2"/>
<keyword id="KW-0012">Acyltransferase</keyword>
<keyword id="KW-1003">Cell membrane</keyword>
<keyword id="KW-0444">Lipid biosynthesis</keyword>
<keyword id="KW-0443">Lipid metabolism</keyword>
<keyword id="KW-0472">Membrane</keyword>
<keyword id="KW-0594">Phospholipid biosynthesis</keyword>
<keyword id="KW-1208">Phospholipid metabolism</keyword>
<keyword id="KW-1185">Reference proteome</keyword>
<keyword id="KW-0808">Transferase</keyword>
<dbReference type="EC" id="2.3.1.15"/>
<dbReference type="EMBL" id="AE000516">
    <property type="protein sequence ID" value="AAK46859.1"/>
    <property type="molecule type" value="Genomic_DNA"/>
</dbReference>
<dbReference type="PIR" id="A70868">
    <property type="entry name" value="A70868"/>
</dbReference>
<dbReference type="RefSeq" id="WP_003899342.1">
    <property type="nucleotide sequence ID" value="NZ_KK341227.1"/>
</dbReference>
<dbReference type="SMR" id="P9WI60"/>
<dbReference type="KEGG" id="mtc:MT2555"/>
<dbReference type="PATRIC" id="fig|83331.31.peg.2756"/>
<dbReference type="HOGENOM" id="CLU_015407_1_0_11"/>
<dbReference type="UniPathway" id="UPA00557">
    <property type="reaction ID" value="UER00612"/>
</dbReference>
<dbReference type="Proteomes" id="UP000001020">
    <property type="component" value="Chromosome"/>
</dbReference>
<dbReference type="GO" id="GO:0005886">
    <property type="term" value="C:plasma membrane"/>
    <property type="evidence" value="ECO:0007669"/>
    <property type="project" value="UniProtKB-SubCell"/>
</dbReference>
<dbReference type="GO" id="GO:0004366">
    <property type="term" value="F:glycerol-3-phosphate O-acyltransferase activity"/>
    <property type="evidence" value="ECO:0007669"/>
    <property type="project" value="UniProtKB-UniRule"/>
</dbReference>
<dbReference type="GO" id="GO:0016024">
    <property type="term" value="P:CDP-diacylglycerol biosynthetic process"/>
    <property type="evidence" value="ECO:0007669"/>
    <property type="project" value="UniProtKB-UniRule"/>
</dbReference>
<dbReference type="CDD" id="cd07993">
    <property type="entry name" value="LPLAT_DHAPAT-like"/>
    <property type="match status" value="1"/>
</dbReference>
<dbReference type="HAMAP" id="MF_00393">
    <property type="entry name" value="Glyc3P_acyltrans"/>
    <property type="match status" value="1"/>
</dbReference>
<dbReference type="InterPro" id="IPR022284">
    <property type="entry name" value="GPAT/DHAPAT"/>
</dbReference>
<dbReference type="InterPro" id="IPR045520">
    <property type="entry name" value="GPAT/DHAPAT_C"/>
</dbReference>
<dbReference type="InterPro" id="IPR041728">
    <property type="entry name" value="GPAT/DHAPAT_LPLAT"/>
</dbReference>
<dbReference type="InterPro" id="IPR028354">
    <property type="entry name" value="GPAT_PlsB"/>
</dbReference>
<dbReference type="InterPro" id="IPR002123">
    <property type="entry name" value="Plipid/glycerol_acylTrfase"/>
</dbReference>
<dbReference type="NCBIfam" id="NF002886">
    <property type="entry name" value="PRK03355.1"/>
    <property type="match status" value="1"/>
</dbReference>
<dbReference type="PANTHER" id="PTHR12563:SF17">
    <property type="entry name" value="DIHYDROXYACETONE PHOSPHATE ACYLTRANSFERASE"/>
    <property type="match status" value="1"/>
</dbReference>
<dbReference type="PANTHER" id="PTHR12563">
    <property type="entry name" value="GLYCEROL-3-PHOSPHATE ACYLTRANSFERASE"/>
    <property type="match status" value="1"/>
</dbReference>
<dbReference type="Pfam" id="PF01553">
    <property type="entry name" value="Acyltransferase"/>
    <property type="match status" value="1"/>
</dbReference>
<dbReference type="Pfam" id="PF19277">
    <property type="entry name" value="GPAT_C"/>
    <property type="match status" value="1"/>
</dbReference>
<dbReference type="PIRSF" id="PIRSF500064">
    <property type="entry name" value="GPAT"/>
    <property type="match status" value="1"/>
</dbReference>
<dbReference type="PIRSF" id="PIRSF000437">
    <property type="entry name" value="GPAT_DHAPAT"/>
    <property type="match status" value="1"/>
</dbReference>
<dbReference type="SMART" id="SM00563">
    <property type="entry name" value="PlsC"/>
    <property type="match status" value="1"/>
</dbReference>
<dbReference type="SUPFAM" id="SSF69593">
    <property type="entry name" value="Glycerol-3-phosphate (1)-acyltransferase"/>
    <property type="match status" value="1"/>
</dbReference>
<feature type="chain" id="PRO_0000428063" description="Glycerol-3-phosphate acyltransferase">
    <location>
        <begin position="1"/>
        <end position="789"/>
    </location>
</feature>
<feature type="short sequence motif" description="HXXXXD motif">
    <location>
        <begin position="276"/>
        <end position="281"/>
    </location>
</feature>
<name>PLSB_MYCTO</name>